<sequence>MSQEFLARILEQKAHEVEQMKLEQIQPLRQTYRLAEFLKNHQDRLQVIAEVKKASPSLGDINLDVDIVQQAQTYEENGTVMISVLTDEVFFKGHLNYLREISSQVEIPTLNKDFIIDEKQIIRARNAGATVILLIVAALSEERLKKLYDYATELGLEVLVETHNLAELEVAHRLGAEIIGVNNRNLTTFEVDLQTSVDLAPYFEEGRYYISESAIFTGQDAERLAPYFNGILVGTALMQAENVAQRIKELQIDKG</sequence>
<proteinExistence type="inferred from homology"/>
<name>TRPC_STRP7</name>
<comment type="catalytic activity">
    <reaction evidence="1">
        <text>1-(2-carboxyphenylamino)-1-deoxy-D-ribulose 5-phosphate + H(+) = (1S,2R)-1-C-(indol-3-yl)glycerol 3-phosphate + CO2 + H2O</text>
        <dbReference type="Rhea" id="RHEA:23476"/>
        <dbReference type="ChEBI" id="CHEBI:15377"/>
        <dbReference type="ChEBI" id="CHEBI:15378"/>
        <dbReference type="ChEBI" id="CHEBI:16526"/>
        <dbReference type="ChEBI" id="CHEBI:58613"/>
        <dbReference type="ChEBI" id="CHEBI:58866"/>
        <dbReference type="EC" id="4.1.1.48"/>
    </reaction>
</comment>
<comment type="pathway">
    <text evidence="1">Amino-acid biosynthesis; L-tryptophan biosynthesis; L-tryptophan from chorismate: step 4/5.</text>
</comment>
<comment type="similarity">
    <text evidence="1">Belongs to the TrpC family.</text>
</comment>
<keyword id="KW-0028">Amino-acid biosynthesis</keyword>
<keyword id="KW-0057">Aromatic amino acid biosynthesis</keyword>
<keyword id="KW-0210">Decarboxylase</keyword>
<keyword id="KW-0456">Lyase</keyword>
<keyword id="KW-0822">Tryptophan biosynthesis</keyword>
<reference key="1">
    <citation type="journal article" date="2010" name="Genome Biol.">
        <title>Structure and dynamics of the pan-genome of Streptococcus pneumoniae and closely related species.</title>
        <authorList>
            <person name="Donati C."/>
            <person name="Hiller N.L."/>
            <person name="Tettelin H."/>
            <person name="Muzzi A."/>
            <person name="Croucher N.J."/>
            <person name="Angiuoli S.V."/>
            <person name="Oggioni M."/>
            <person name="Dunning Hotopp J.C."/>
            <person name="Hu F.Z."/>
            <person name="Riley D.R."/>
            <person name="Covacci A."/>
            <person name="Mitchell T.J."/>
            <person name="Bentley S.D."/>
            <person name="Kilian M."/>
            <person name="Ehrlich G.D."/>
            <person name="Rappuoli R."/>
            <person name="Moxon E.R."/>
            <person name="Masignani V."/>
        </authorList>
    </citation>
    <scope>NUCLEOTIDE SEQUENCE [LARGE SCALE GENOMIC DNA]</scope>
    <source>
        <strain>70585</strain>
    </source>
</reference>
<evidence type="ECO:0000255" key="1">
    <source>
        <dbReference type="HAMAP-Rule" id="MF_00134"/>
    </source>
</evidence>
<dbReference type="EC" id="4.1.1.48" evidence="1"/>
<dbReference type="EMBL" id="CP000918">
    <property type="protein sequence ID" value="ACO17800.1"/>
    <property type="molecule type" value="Genomic_DNA"/>
</dbReference>
<dbReference type="RefSeq" id="WP_000076511.1">
    <property type="nucleotide sequence ID" value="NC_012468.1"/>
</dbReference>
<dbReference type="SMR" id="C1C968"/>
<dbReference type="KEGG" id="snm:SP70585_1875"/>
<dbReference type="HOGENOM" id="CLU_034247_2_1_9"/>
<dbReference type="UniPathway" id="UPA00035">
    <property type="reaction ID" value="UER00043"/>
</dbReference>
<dbReference type="Proteomes" id="UP000002211">
    <property type="component" value="Chromosome"/>
</dbReference>
<dbReference type="GO" id="GO:0004425">
    <property type="term" value="F:indole-3-glycerol-phosphate synthase activity"/>
    <property type="evidence" value="ECO:0007669"/>
    <property type="project" value="UniProtKB-UniRule"/>
</dbReference>
<dbReference type="GO" id="GO:0004640">
    <property type="term" value="F:phosphoribosylanthranilate isomerase activity"/>
    <property type="evidence" value="ECO:0007669"/>
    <property type="project" value="TreeGrafter"/>
</dbReference>
<dbReference type="GO" id="GO:0000162">
    <property type="term" value="P:L-tryptophan biosynthetic process"/>
    <property type="evidence" value="ECO:0007669"/>
    <property type="project" value="UniProtKB-UniRule"/>
</dbReference>
<dbReference type="CDD" id="cd00331">
    <property type="entry name" value="IGPS"/>
    <property type="match status" value="1"/>
</dbReference>
<dbReference type="FunFam" id="3.20.20.70:FF:000024">
    <property type="entry name" value="Indole-3-glycerol phosphate synthase"/>
    <property type="match status" value="1"/>
</dbReference>
<dbReference type="Gene3D" id="3.20.20.70">
    <property type="entry name" value="Aldolase class I"/>
    <property type="match status" value="1"/>
</dbReference>
<dbReference type="HAMAP" id="MF_00134_B">
    <property type="entry name" value="IGPS_B"/>
    <property type="match status" value="1"/>
</dbReference>
<dbReference type="InterPro" id="IPR013785">
    <property type="entry name" value="Aldolase_TIM"/>
</dbReference>
<dbReference type="InterPro" id="IPR045186">
    <property type="entry name" value="Indole-3-glycerol_P_synth"/>
</dbReference>
<dbReference type="InterPro" id="IPR013798">
    <property type="entry name" value="Indole-3-glycerol_P_synth_dom"/>
</dbReference>
<dbReference type="InterPro" id="IPR001468">
    <property type="entry name" value="Indole-3-GlycerolPSynthase_CS"/>
</dbReference>
<dbReference type="InterPro" id="IPR011060">
    <property type="entry name" value="RibuloseP-bd_barrel"/>
</dbReference>
<dbReference type="NCBIfam" id="NF001371">
    <property type="entry name" value="PRK00278.1-3"/>
    <property type="match status" value="1"/>
</dbReference>
<dbReference type="NCBIfam" id="NF001377">
    <property type="entry name" value="PRK00278.2-4"/>
    <property type="match status" value="1"/>
</dbReference>
<dbReference type="PANTHER" id="PTHR22854:SF2">
    <property type="entry name" value="INDOLE-3-GLYCEROL-PHOSPHATE SYNTHASE"/>
    <property type="match status" value="1"/>
</dbReference>
<dbReference type="PANTHER" id="PTHR22854">
    <property type="entry name" value="TRYPTOPHAN BIOSYNTHESIS PROTEIN"/>
    <property type="match status" value="1"/>
</dbReference>
<dbReference type="Pfam" id="PF00218">
    <property type="entry name" value="IGPS"/>
    <property type="match status" value="1"/>
</dbReference>
<dbReference type="SUPFAM" id="SSF51366">
    <property type="entry name" value="Ribulose-phoshate binding barrel"/>
    <property type="match status" value="1"/>
</dbReference>
<dbReference type="PROSITE" id="PS00614">
    <property type="entry name" value="IGPS"/>
    <property type="match status" value="1"/>
</dbReference>
<protein>
    <recommendedName>
        <fullName evidence="1">Indole-3-glycerol phosphate synthase</fullName>
        <shortName evidence="1">IGPS</shortName>
        <ecNumber evidence="1">4.1.1.48</ecNumber>
    </recommendedName>
</protein>
<organism>
    <name type="scientific">Streptococcus pneumoniae (strain 70585)</name>
    <dbReference type="NCBI Taxonomy" id="488221"/>
    <lineage>
        <taxon>Bacteria</taxon>
        <taxon>Bacillati</taxon>
        <taxon>Bacillota</taxon>
        <taxon>Bacilli</taxon>
        <taxon>Lactobacillales</taxon>
        <taxon>Streptococcaceae</taxon>
        <taxon>Streptococcus</taxon>
    </lineage>
</organism>
<accession>C1C968</accession>
<gene>
    <name evidence="1" type="primary">trpC</name>
    <name type="ordered locus">SP70585_1875</name>
</gene>
<feature type="chain" id="PRO_1000198787" description="Indole-3-glycerol phosphate synthase">
    <location>
        <begin position="1"/>
        <end position="255"/>
    </location>
</feature>